<gene>
    <name type="primary">cyp165C4</name>
    <name type="synonym">oxyC</name>
</gene>
<comment type="function">
    <text>Involved in the coupling of aromatic side chains of the heptapeptide of vancomycin.</text>
</comment>
<comment type="cofactor">
    <cofactor evidence="1">
        <name>heme</name>
        <dbReference type="ChEBI" id="CHEBI:30413"/>
    </cofactor>
</comment>
<comment type="pathway">
    <text>Antibiotic biosynthesis; vancomycin biosynthesis.</text>
</comment>
<comment type="similarity">
    <text evidence="2">Belongs to the cytochrome P450 family.</text>
</comment>
<sequence length="406" mass="45187">MGHDIDQVAPLLREPANFQLRTNCDPHEDNFGLRAHGPLVRIVGESSTQLGRDFVWQAHGYEVVRRILGDHEHFTTRPQFTQSKSGAHVEAQFVGQISTYDPPEHTRLRKMLTPEFTVRRIRRMEPAIQSLIDDRLDLLEAEGPSADLQGLFADPVGAHALCELLGIPRDDQREFVRRIRRNADLSRGLKARAADSAAFNRYLDNLLARQRADPDDGLLGMIVRDHGDNVTDEELKGLCTALILGGVETVAGMIGFGVLALLDNPGQIELLFESPEKAERVVNELVRYLSPVQAPNPRLAIKDVVIDGQLIKAGDYVLCSILMANRDEALTPDPDVLDANRAAVSDVGFGHGIHYCVGAALARSMLRMAYQTLWRRFPGLRLAVPIEEVKYRSAFVDCPDQVPVTW</sequence>
<feature type="chain" id="PRO_0000052240" description="Cytochrome P450 165C4">
    <location>
        <begin position="1"/>
        <end position="406"/>
    </location>
</feature>
<feature type="binding site" description="axial binding residue" evidence="1 4">
    <location>
        <position position="356"/>
    </location>
    <ligand>
        <name>heme</name>
        <dbReference type="ChEBI" id="CHEBI:30413"/>
    </ligand>
    <ligandPart>
        <name>Fe</name>
        <dbReference type="ChEBI" id="CHEBI:18248"/>
    </ligandPart>
</feature>
<feature type="strand" evidence="5">
    <location>
        <begin position="11"/>
        <end position="13"/>
    </location>
</feature>
<feature type="turn" evidence="5">
    <location>
        <begin position="16"/>
        <end position="19"/>
    </location>
</feature>
<feature type="helix" evidence="5">
    <location>
        <begin position="28"/>
        <end position="34"/>
    </location>
</feature>
<feature type="strand" evidence="5">
    <location>
        <begin position="38"/>
        <end position="44"/>
    </location>
</feature>
<feature type="helix" evidence="5">
    <location>
        <begin position="45"/>
        <end position="49"/>
    </location>
</feature>
<feature type="strand" evidence="5">
    <location>
        <begin position="55"/>
        <end position="58"/>
    </location>
</feature>
<feature type="helix" evidence="5">
    <location>
        <begin position="61"/>
        <end position="69"/>
    </location>
</feature>
<feature type="strand" evidence="5">
    <location>
        <begin position="72"/>
        <end position="75"/>
    </location>
</feature>
<feature type="helix" evidence="5">
    <location>
        <begin position="91"/>
        <end position="93"/>
    </location>
</feature>
<feature type="helix" evidence="5">
    <location>
        <begin position="97"/>
        <end position="99"/>
    </location>
</feature>
<feature type="helix" evidence="5">
    <location>
        <begin position="104"/>
        <end position="112"/>
    </location>
</feature>
<feature type="helix" evidence="5">
    <location>
        <begin position="113"/>
        <end position="115"/>
    </location>
</feature>
<feature type="helix" evidence="5">
    <location>
        <begin position="118"/>
        <end position="142"/>
    </location>
</feature>
<feature type="helix" evidence="5">
    <location>
        <begin position="148"/>
        <end position="151"/>
    </location>
</feature>
<feature type="helix" evidence="5">
    <location>
        <begin position="153"/>
        <end position="165"/>
    </location>
</feature>
<feature type="helix" evidence="5">
    <location>
        <begin position="169"/>
        <end position="181"/>
    </location>
</feature>
<feature type="helix" evidence="5">
    <location>
        <begin position="189"/>
        <end position="212"/>
    </location>
</feature>
<feature type="helix" evidence="5">
    <location>
        <begin position="218"/>
        <end position="226"/>
    </location>
</feature>
<feature type="helix" evidence="5">
    <location>
        <begin position="227"/>
        <end position="229"/>
    </location>
</feature>
<feature type="helix" evidence="5">
    <location>
        <begin position="232"/>
        <end position="263"/>
    </location>
</feature>
<feature type="helix" evidence="5">
    <location>
        <begin position="265"/>
        <end position="269"/>
    </location>
</feature>
<feature type="helix" evidence="5">
    <location>
        <begin position="270"/>
        <end position="273"/>
    </location>
</feature>
<feature type="helix" evidence="5">
    <location>
        <begin position="275"/>
        <end position="289"/>
    </location>
</feature>
<feature type="strand" evidence="5">
    <location>
        <begin position="298"/>
        <end position="302"/>
    </location>
</feature>
<feature type="strand" evidence="5">
    <location>
        <begin position="304"/>
        <end position="306"/>
    </location>
</feature>
<feature type="strand" evidence="5">
    <location>
        <begin position="309"/>
        <end position="311"/>
    </location>
</feature>
<feature type="strand" evidence="5">
    <location>
        <begin position="316"/>
        <end position="319"/>
    </location>
</feature>
<feature type="helix" evidence="5">
    <location>
        <begin position="321"/>
        <end position="324"/>
    </location>
</feature>
<feature type="turn" evidence="5">
    <location>
        <begin position="328"/>
        <end position="330"/>
    </location>
</feature>
<feature type="strand" evidence="5">
    <location>
        <begin position="331"/>
        <end position="333"/>
    </location>
</feature>
<feature type="helix" evidence="5">
    <location>
        <begin position="359"/>
        <end position="376"/>
    </location>
</feature>
<feature type="strand" evidence="5">
    <location>
        <begin position="381"/>
        <end position="384"/>
    </location>
</feature>
<feature type="helix" evidence="5">
    <location>
        <begin position="386"/>
        <end position="388"/>
    </location>
</feature>
<feature type="strand" evidence="5">
    <location>
        <begin position="394"/>
        <end position="396"/>
    </location>
</feature>
<feature type="strand" evidence="5">
    <location>
        <begin position="403"/>
        <end position="405"/>
    </location>
</feature>
<accession>Q8RN03</accession>
<reference evidence="2" key="1">
    <citation type="journal article" date="2002" name="J. Biol. Chem.">
        <title>Crystal structure of OxyB, a cytochrome P450 implicated in an oxidative phenol coupling reaction during vancomycin biosynthesis.</title>
        <authorList>
            <person name="Zerbe K."/>
            <person name="Pylypenko O."/>
            <person name="Vitali F."/>
            <person name="Zhang W."/>
            <person name="Rousett S."/>
            <person name="Heck M."/>
            <person name="Vrijbloed J.W."/>
            <person name="Bischoff D."/>
            <person name="Bister B."/>
            <person name="Suessmuth R.D."/>
            <person name="Pelzer S."/>
            <person name="Wohlleben W."/>
            <person name="Robinson J.A."/>
            <person name="Schlichting I."/>
        </authorList>
    </citation>
    <scope>NUCLEOTIDE SEQUENCE [GENOMIC DNA]</scope>
</reference>
<reference key="2">
    <citation type="journal article" date="2003" name="J. Biol. Chem.">
        <title>Crystal structure of OxyC, a cytochrome P450 implicated in an oxidative C-C coupling reaction during vancomycin biosynthesis.</title>
        <authorList>
            <person name="Pylypenko O."/>
            <person name="Vitali F."/>
            <person name="Zerbe K."/>
            <person name="Robinson J.A."/>
            <person name="Schlichting I."/>
        </authorList>
    </citation>
    <scope>X-RAY CRYSTALLOGRAPHY (1.90 ANGSTROMS) IN COMPLEX WITH HEME</scope>
</reference>
<evidence type="ECO:0000269" key="1">
    <source>
    </source>
</evidence>
<evidence type="ECO:0000305" key="2"/>
<evidence type="ECO:0000312" key="3">
    <source>
        <dbReference type="EMBL" id="AAL90879.1"/>
    </source>
</evidence>
<evidence type="ECO:0007744" key="4">
    <source>
        <dbReference type="PDB" id="1UED"/>
    </source>
</evidence>
<evidence type="ECO:0007829" key="5">
    <source>
        <dbReference type="PDB" id="1UED"/>
    </source>
</evidence>
<dbReference type="EC" id="1.14.-.-"/>
<dbReference type="EMBL" id="AF486630">
    <property type="protein sequence ID" value="AAL90879.1"/>
    <property type="molecule type" value="Genomic_DNA"/>
</dbReference>
<dbReference type="PDB" id="1UED">
    <property type="method" value="X-ray"/>
    <property type="resolution" value="1.90 A"/>
    <property type="chains" value="A/B=1-406"/>
</dbReference>
<dbReference type="PDBsum" id="1UED"/>
<dbReference type="SMR" id="Q8RN03"/>
<dbReference type="STRING" id="31958.SD37_33700"/>
<dbReference type="eggNOG" id="COG2124">
    <property type="taxonomic scope" value="Bacteria"/>
</dbReference>
<dbReference type="UniPathway" id="UPA00162"/>
<dbReference type="EvolutionaryTrace" id="Q8RN03"/>
<dbReference type="GO" id="GO:0020037">
    <property type="term" value="F:heme binding"/>
    <property type="evidence" value="ECO:0007669"/>
    <property type="project" value="InterPro"/>
</dbReference>
<dbReference type="GO" id="GO:0005506">
    <property type="term" value="F:iron ion binding"/>
    <property type="evidence" value="ECO:0007669"/>
    <property type="project" value="InterPro"/>
</dbReference>
<dbReference type="GO" id="GO:0004497">
    <property type="term" value="F:monooxygenase activity"/>
    <property type="evidence" value="ECO:0007669"/>
    <property type="project" value="UniProtKB-KW"/>
</dbReference>
<dbReference type="GO" id="GO:0016705">
    <property type="term" value="F:oxidoreductase activity, acting on paired donors, with incorporation or reduction of molecular oxygen"/>
    <property type="evidence" value="ECO:0007669"/>
    <property type="project" value="InterPro"/>
</dbReference>
<dbReference type="GO" id="GO:0033072">
    <property type="term" value="P:vancomycin biosynthetic process"/>
    <property type="evidence" value="ECO:0007669"/>
    <property type="project" value="UniProtKB-UniPathway"/>
</dbReference>
<dbReference type="CDD" id="cd11030">
    <property type="entry name" value="CYP105-like"/>
    <property type="match status" value="1"/>
</dbReference>
<dbReference type="FunFam" id="1.10.630.10:FF:000018">
    <property type="entry name" value="Cytochrome P450 monooxygenase"/>
    <property type="match status" value="1"/>
</dbReference>
<dbReference type="Gene3D" id="1.10.630.10">
    <property type="entry name" value="Cytochrome P450"/>
    <property type="match status" value="1"/>
</dbReference>
<dbReference type="InterPro" id="IPR001128">
    <property type="entry name" value="Cyt_P450"/>
</dbReference>
<dbReference type="InterPro" id="IPR002397">
    <property type="entry name" value="Cyt_P450_B"/>
</dbReference>
<dbReference type="InterPro" id="IPR017972">
    <property type="entry name" value="Cyt_P450_CS"/>
</dbReference>
<dbReference type="InterPro" id="IPR036396">
    <property type="entry name" value="Cyt_P450_sf"/>
</dbReference>
<dbReference type="PANTHER" id="PTHR46696">
    <property type="entry name" value="P450, PUTATIVE (EUROFUNG)-RELATED"/>
    <property type="match status" value="1"/>
</dbReference>
<dbReference type="PANTHER" id="PTHR46696:SF6">
    <property type="entry name" value="P450, PUTATIVE (EUROFUNG)-RELATED"/>
    <property type="match status" value="1"/>
</dbReference>
<dbReference type="Pfam" id="PF00067">
    <property type="entry name" value="p450"/>
    <property type="match status" value="1"/>
</dbReference>
<dbReference type="PRINTS" id="PR00359">
    <property type="entry name" value="BP450"/>
</dbReference>
<dbReference type="SUPFAM" id="SSF48264">
    <property type="entry name" value="Cytochrome P450"/>
    <property type="match status" value="1"/>
</dbReference>
<dbReference type="PROSITE" id="PS00086">
    <property type="entry name" value="CYTOCHROME_P450"/>
    <property type="match status" value="1"/>
</dbReference>
<proteinExistence type="evidence at protein level"/>
<protein>
    <recommendedName>
        <fullName>Cytochrome P450 165C4</fullName>
        <ecNumber>1.14.-.-</ecNumber>
    </recommendedName>
    <alternativeName>
        <fullName>Vancomycin biosynthesis protein OxyC</fullName>
    </alternativeName>
</protein>
<organism evidence="3">
    <name type="scientific">Amycolatopsis orientalis</name>
    <name type="common">Nocardia orientalis</name>
    <dbReference type="NCBI Taxonomy" id="31958"/>
    <lineage>
        <taxon>Bacteria</taxon>
        <taxon>Bacillati</taxon>
        <taxon>Actinomycetota</taxon>
        <taxon>Actinomycetes</taxon>
        <taxon>Pseudonocardiales</taxon>
        <taxon>Pseudonocardiaceae</taxon>
        <taxon>Amycolatopsis</taxon>
    </lineage>
</organism>
<keyword id="KW-0002">3D-structure</keyword>
<keyword id="KW-0349">Heme</keyword>
<keyword id="KW-0408">Iron</keyword>
<keyword id="KW-0479">Metal-binding</keyword>
<keyword id="KW-0503">Monooxygenase</keyword>
<keyword id="KW-0560">Oxidoreductase</keyword>
<name>C5C4_AMYOR</name>